<dbReference type="EMBL" id="M32059">
    <property type="protein sequence ID" value="AAA24918.1"/>
    <property type="molecule type" value="Genomic_DNA"/>
</dbReference>
<dbReference type="EMBL" id="AM233362">
    <property type="protein sequence ID" value="CAJ78860.1"/>
    <property type="molecule type" value="Genomic_DNA"/>
</dbReference>
<dbReference type="PIR" id="A37169">
    <property type="entry name" value="A37169"/>
</dbReference>
<dbReference type="RefSeq" id="WP_003014682.1">
    <property type="nucleotide sequence ID" value="NZ_CP009694.1"/>
</dbReference>
<dbReference type="SMR" id="P18152"/>
<dbReference type="KEGG" id="ftl:FTL_0420"/>
<dbReference type="Proteomes" id="UP000001944">
    <property type="component" value="Chromosome"/>
</dbReference>
<dbReference type="GO" id="GO:0005886">
    <property type="term" value="C:plasma membrane"/>
    <property type="evidence" value="ECO:0007669"/>
    <property type="project" value="UniProtKB-SubCell"/>
</dbReference>
<dbReference type="CDD" id="cd00248">
    <property type="entry name" value="Mth938-like"/>
    <property type="match status" value="1"/>
</dbReference>
<dbReference type="Gene3D" id="3.40.1230.10">
    <property type="entry name" value="MTH938-like"/>
    <property type="match status" value="1"/>
</dbReference>
<dbReference type="InterPro" id="IPR036748">
    <property type="entry name" value="MTH938-like_sf"/>
</dbReference>
<dbReference type="InterPro" id="IPR007523">
    <property type="entry name" value="NDUFAF3/AAMDC"/>
</dbReference>
<dbReference type="PANTHER" id="PTHR21192:SF2">
    <property type="entry name" value="NADH DEHYDROGENASE [UBIQUINONE] 1 ALPHA SUBCOMPLEX ASSEMBLY FACTOR 3"/>
    <property type="match status" value="1"/>
</dbReference>
<dbReference type="PANTHER" id="PTHR21192">
    <property type="entry name" value="NUCLEAR PROTEIN E3-3"/>
    <property type="match status" value="1"/>
</dbReference>
<dbReference type="Pfam" id="PF04430">
    <property type="entry name" value="DUF498"/>
    <property type="match status" value="1"/>
</dbReference>
<dbReference type="SUPFAM" id="SSF64076">
    <property type="entry name" value="MTH938-like"/>
    <property type="match status" value="1"/>
</dbReference>
<evidence type="ECO:0000305" key="1"/>
<accession>P18152</accession>
<accession>Q2A509</accession>
<feature type="chain" id="PRO_0000096546" description="13 kDa major membrane protein">
    <location>
        <begin position="1"/>
        <end position="123"/>
    </location>
</feature>
<comment type="subcellular location">
    <subcellularLocation>
        <location evidence="1">Cell membrane</location>
    </subcellularLocation>
</comment>
<organism>
    <name type="scientific">Francisella tularensis subsp. holarctica (strain LVS)</name>
    <dbReference type="NCBI Taxonomy" id="376619"/>
    <lineage>
        <taxon>Bacteria</taxon>
        <taxon>Pseudomonadati</taxon>
        <taxon>Pseudomonadota</taxon>
        <taxon>Gammaproteobacteria</taxon>
        <taxon>Thiotrichales</taxon>
        <taxon>Francisellaceae</taxon>
        <taxon>Francisella</taxon>
    </lineage>
</organism>
<reference key="1">
    <citation type="journal article" date="1990" name="J. Immunol.">
        <title>Nucleotide sequence and T cell epitopes of a membrane protein of Francisella tularensis.</title>
        <authorList>
            <person name="Sjoestedt A."/>
            <person name="Sandstroem G."/>
            <person name="Taernvik A."/>
            <person name="Jaurin B."/>
        </authorList>
    </citation>
    <scope>NUCLEOTIDE SEQUENCE [GENOMIC DNA]</scope>
</reference>
<reference key="2">
    <citation type="submission" date="2006-03" db="EMBL/GenBank/DDBJ databases">
        <title>Complete genome sequence of Francisella tularensis LVS (Live Vaccine Strain).</title>
        <authorList>
            <person name="Chain P."/>
            <person name="Larimer F."/>
            <person name="Land M."/>
            <person name="Stilwagen S."/>
            <person name="Larsson P."/>
            <person name="Bearden S."/>
            <person name="Chu M."/>
            <person name="Oyston P."/>
            <person name="Forsman M."/>
            <person name="Andersson S."/>
            <person name="Lindler L."/>
            <person name="Titball R."/>
            <person name="Garcia E."/>
        </authorList>
    </citation>
    <scope>NUCLEOTIDE SEQUENCE [LARGE SCALE GENOMIC DNA]</scope>
    <source>
        <strain>LVS</strain>
    </source>
</reference>
<name>MP13_FRATH</name>
<gene>
    <name type="ordered locus">FTL_0420</name>
</gene>
<proteinExistence type="predicted"/>
<protein>
    <recommendedName>
        <fullName>13 kDa major membrane protein</fullName>
    </recommendedName>
</protein>
<keyword id="KW-1003">Cell membrane</keyword>
<keyword id="KW-0472">Membrane</keyword>
<keyword id="KW-1185">Reference proteome</keyword>
<sequence>MMTLQEEKIQAPVFFKEYVKGRFILNIGEYNHPLILSATQVLEYQDKIDDIQSIKKSHLDLILATNPEIILIGTGEKQLLPPLEIINQIAKAGKSVDFMASDTACKTYNLLVNENRNVSCIII</sequence>